<geneLocation type="mitochondrion"/>
<accession>O78688</accession>
<name>NU5M_CARAU</name>
<dbReference type="EC" id="7.1.1.2"/>
<dbReference type="EMBL" id="AB006953">
    <property type="protein sequence ID" value="BAA31248.1"/>
    <property type="molecule type" value="Genomic_DNA"/>
</dbReference>
<dbReference type="RefSeq" id="NP_008598.1">
    <property type="nucleotide sequence ID" value="NC_002079.1"/>
</dbReference>
<dbReference type="SMR" id="O78688"/>
<dbReference type="GeneID" id="808419"/>
<dbReference type="CTD" id="4540"/>
<dbReference type="OrthoDB" id="10069788at2759"/>
<dbReference type="Proteomes" id="UP000515129">
    <property type="component" value="Mitochondrion MT"/>
</dbReference>
<dbReference type="GO" id="GO:0005743">
    <property type="term" value="C:mitochondrial inner membrane"/>
    <property type="evidence" value="ECO:0007669"/>
    <property type="project" value="UniProtKB-SubCell"/>
</dbReference>
<dbReference type="GO" id="GO:0008137">
    <property type="term" value="F:NADH dehydrogenase (ubiquinone) activity"/>
    <property type="evidence" value="ECO:0007669"/>
    <property type="project" value="UniProtKB-EC"/>
</dbReference>
<dbReference type="GO" id="GO:0042773">
    <property type="term" value="P:ATP synthesis coupled electron transport"/>
    <property type="evidence" value="ECO:0007669"/>
    <property type="project" value="InterPro"/>
</dbReference>
<dbReference type="GO" id="GO:0015990">
    <property type="term" value="P:electron transport coupled proton transport"/>
    <property type="evidence" value="ECO:0007669"/>
    <property type="project" value="TreeGrafter"/>
</dbReference>
<dbReference type="InterPro" id="IPR010934">
    <property type="entry name" value="NADH_DH_su5_C"/>
</dbReference>
<dbReference type="InterPro" id="IPR018393">
    <property type="entry name" value="NADHpl_OxRdtase_5_subgr"/>
</dbReference>
<dbReference type="InterPro" id="IPR001750">
    <property type="entry name" value="ND/Mrp_TM"/>
</dbReference>
<dbReference type="InterPro" id="IPR003945">
    <property type="entry name" value="NU5C-like"/>
</dbReference>
<dbReference type="InterPro" id="IPR001516">
    <property type="entry name" value="Proton_antipo_N"/>
</dbReference>
<dbReference type="NCBIfam" id="TIGR01974">
    <property type="entry name" value="NDH_I_L"/>
    <property type="match status" value="1"/>
</dbReference>
<dbReference type="PANTHER" id="PTHR42829">
    <property type="entry name" value="NADH-UBIQUINONE OXIDOREDUCTASE CHAIN 5"/>
    <property type="match status" value="1"/>
</dbReference>
<dbReference type="PANTHER" id="PTHR42829:SF2">
    <property type="entry name" value="NADH-UBIQUINONE OXIDOREDUCTASE CHAIN 5"/>
    <property type="match status" value="1"/>
</dbReference>
<dbReference type="Pfam" id="PF06455">
    <property type="entry name" value="NADH5_C"/>
    <property type="match status" value="1"/>
</dbReference>
<dbReference type="Pfam" id="PF00361">
    <property type="entry name" value="Proton_antipo_M"/>
    <property type="match status" value="1"/>
</dbReference>
<dbReference type="Pfam" id="PF00662">
    <property type="entry name" value="Proton_antipo_N"/>
    <property type="match status" value="1"/>
</dbReference>
<dbReference type="PRINTS" id="PR01434">
    <property type="entry name" value="NADHDHGNASE5"/>
</dbReference>
<keyword id="KW-0249">Electron transport</keyword>
<keyword id="KW-0472">Membrane</keyword>
<keyword id="KW-0496">Mitochondrion</keyword>
<keyword id="KW-0999">Mitochondrion inner membrane</keyword>
<keyword id="KW-0520">NAD</keyword>
<keyword id="KW-1185">Reference proteome</keyword>
<keyword id="KW-0679">Respiratory chain</keyword>
<keyword id="KW-1278">Translocase</keyword>
<keyword id="KW-0812">Transmembrane</keyword>
<keyword id="KW-1133">Transmembrane helix</keyword>
<keyword id="KW-0813">Transport</keyword>
<keyword id="KW-0830">Ubiquinone</keyword>
<reference key="1">
    <citation type="journal article" date="1998" name="Zool. Sci.">
        <title>The complete sequence of mitochondrial genome from a gynogenetic triploid 'ginbuna' (Carassius auratus langsdorfi).</title>
        <authorList>
            <person name="Murakami M."/>
            <person name="Yamashita Y."/>
            <person name="Fujitani H."/>
        </authorList>
    </citation>
    <scope>NUCLEOTIDE SEQUENCE [GENOMIC DNA]</scope>
    <source>
        <strain>AZ3 / Langsdorfi</strain>
        <tissue>Oocyte</tissue>
    </source>
</reference>
<evidence type="ECO:0000250" key="1"/>
<evidence type="ECO:0000255" key="2"/>
<evidence type="ECO:0000305" key="3"/>
<comment type="function">
    <text evidence="1">Core subunit of the mitochondrial membrane respiratory chain NADH dehydrogenase (Complex I) that is believed to belong to the minimal assembly required for catalysis. Complex I functions in the transfer of electrons from NADH to the respiratory chain. The immediate electron acceptor for the enzyme is believed to be ubiquinone (By similarity).</text>
</comment>
<comment type="catalytic activity">
    <reaction>
        <text>a ubiquinone + NADH + 5 H(+)(in) = a ubiquinol + NAD(+) + 4 H(+)(out)</text>
        <dbReference type="Rhea" id="RHEA:29091"/>
        <dbReference type="Rhea" id="RHEA-COMP:9565"/>
        <dbReference type="Rhea" id="RHEA-COMP:9566"/>
        <dbReference type="ChEBI" id="CHEBI:15378"/>
        <dbReference type="ChEBI" id="CHEBI:16389"/>
        <dbReference type="ChEBI" id="CHEBI:17976"/>
        <dbReference type="ChEBI" id="CHEBI:57540"/>
        <dbReference type="ChEBI" id="CHEBI:57945"/>
        <dbReference type="EC" id="7.1.1.2"/>
    </reaction>
</comment>
<comment type="subcellular location">
    <subcellularLocation>
        <location evidence="1">Mitochondrion inner membrane</location>
        <topology evidence="1">Multi-pass membrane protein</topology>
    </subcellularLocation>
</comment>
<comment type="similarity">
    <text evidence="3">Belongs to the complex I subunit 5 family.</text>
</comment>
<sequence>MTLIMHSSLLLIFFILMYPLLTTLNPNQQGSNMAGMTKTAVSSAFFISLLPLMIFLNLKTEGIITNWQWMNTQTFDVNISFKFDHYSLIFVPIALYVTWSILEFALWYMHSDPYIDRFFKYLLTFLVAMIILVTANNMFQLFIGWEGVGIMSFLLIGWWHGRADANTAALQAVIYNRVGDIGLIMTMAWFAMNLNSWEIQQIFVLSKNFDMTIPLMGLALAATGKSAQFGLHPWLPSAMEGPTPVSALLHSSTMVVAGIFLLIRLHPLMENNQLALTTCLCLGALTSLFTATCALTQNDIKKIVAFSTSSQLGLMMVTIGLNQPQLAFLHICTHAFFKAMLFLCSGSIIHSLNDEQDIRKMGGLFSIMPATSTYFTIGSLALTGTPFLAGFFSKDAIIEALNTSHLNAWALTLTLIATSFTAVYSFRLVYFVVMGTPRFLALSPINENNPLVINSIKRLAWGSIVAGLIITQNFLPMKTPIMTMPTTLKMAALLVTIAGLLVAMELANMTSKQMKITPIIPLHHFSNMLGFFPTIVHRLLPKLKLTLGQSAATQLDKTWLEAMGPKGLALTQMTMAKVTNDVSRGMIKTYLTIFLLTLILAILPVLL</sequence>
<feature type="chain" id="PRO_0000118075" description="NADH-ubiquinone oxidoreductase chain 5">
    <location>
        <begin position="1"/>
        <end position="607"/>
    </location>
</feature>
<feature type="transmembrane region" description="Helical" evidence="2">
    <location>
        <begin position="1"/>
        <end position="21"/>
    </location>
</feature>
<feature type="transmembrane region" description="Helical" evidence="2">
    <location>
        <begin position="44"/>
        <end position="64"/>
    </location>
</feature>
<feature type="transmembrane region" description="Helical" evidence="2">
    <location>
        <begin position="88"/>
        <end position="108"/>
    </location>
</feature>
<feature type="transmembrane region" description="Helical" evidence="2">
    <location>
        <begin position="118"/>
        <end position="138"/>
    </location>
</feature>
<feature type="transmembrane region" description="Helical" evidence="2">
    <location>
        <begin position="139"/>
        <end position="159"/>
    </location>
</feature>
<feature type="transmembrane region" description="Helical" evidence="2">
    <location>
        <begin position="172"/>
        <end position="192"/>
    </location>
</feature>
<feature type="transmembrane region" description="Helical" evidence="2">
    <location>
        <begin position="243"/>
        <end position="263"/>
    </location>
</feature>
<feature type="transmembrane region" description="Helical" evidence="2">
    <location>
        <begin position="274"/>
        <end position="294"/>
    </location>
</feature>
<feature type="transmembrane region" description="Helical" evidence="2">
    <location>
        <begin position="303"/>
        <end position="323"/>
    </location>
</feature>
<feature type="transmembrane region" description="Helical" evidence="2">
    <location>
        <begin position="326"/>
        <end position="346"/>
    </location>
</feature>
<feature type="transmembrane region" description="Helical" evidence="2">
    <location>
        <begin position="372"/>
        <end position="392"/>
    </location>
</feature>
<feature type="transmembrane region" description="Helical" evidence="2">
    <location>
        <begin position="406"/>
        <end position="426"/>
    </location>
</feature>
<feature type="transmembrane region" description="Helical" evidence="2">
    <location>
        <begin position="450"/>
        <end position="470"/>
    </location>
</feature>
<feature type="transmembrane region" description="Helical" evidence="2">
    <location>
        <begin position="490"/>
        <end position="510"/>
    </location>
</feature>
<feature type="transmembrane region" description="Helical" evidence="2">
    <location>
        <begin position="587"/>
        <end position="607"/>
    </location>
</feature>
<proteinExistence type="inferred from homology"/>
<gene>
    <name type="primary">MT-ND5</name>
    <name type="synonym">MTND5</name>
    <name type="synonym">NADH5</name>
    <name type="synonym">ND5</name>
</gene>
<organism>
    <name type="scientific">Carassius auratus</name>
    <name type="common">Goldfish</name>
    <dbReference type="NCBI Taxonomy" id="7957"/>
    <lineage>
        <taxon>Eukaryota</taxon>
        <taxon>Metazoa</taxon>
        <taxon>Chordata</taxon>
        <taxon>Craniata</taxon>
        <taxon>Vertebrata</taxon>
        <taxon>Euteleostomi</taxon>
        <taxon>Actinopterygii</taxon>
        <taxon>Neopterygii</taxon>
        <taxon>Teleostei</taxon>
        <taxon>Ostariophysi</taxon>
        <taxon>Cypriniformes</taxon>
        <taxon>Cyprinidae</taxon>
        <taxon>Cyprininae</taxon>
        <taxon>Carassius</taxon>
    </lineage>
</organism>
<protein>
    <recommendedName>
        <fullName>NADH-ubiquinone oxidoreductase chain 5</fullName>
        <ecNumber>7.1.1.2</ecNumber>
    </recommendedName>
    <alternativeName>
        <fullName>NADH dehydrogenase subunit 5</fullName>
    </alternativeName>
</protein>